<feature type="chain" id="PRO_0000450475" description="Phenylacetaldehyde synthase">
    <location>
        <begin position="1"/>
        <end position="506"/>
    </location>
</feature>
<feature type="binding site" evidence="1">
    <location>
        <position position="101"/>
    </location>
    <ligand>
        <name>L-phenylalanine</name>
        <dbReference type="ChEBI" id="CHEBI:58095"/>
    </ligand>
</feature>
<feature type="binding site" evidence="1">
    <location>
        <position position="202"/>
    </location>
    <ligand>
        <name>L-phenylalanine</name>
        <dbReference type="ChEBI" id="CHEBI:58095"/>
    </ligand>
</feature>
<feature type="binding site" evidence="1">
    <location>
        <position position="317"/>
    </location>
    <ligand>
        <name>L-phenylalanine</name>
        <dbReference type="ChEBI" id="CHEBI:58095"/>
    </ligand>
</feature>
<feature type="modified residue" description="N6-(pyridoxal phosphate)lysine" evidence="5">
    <location>
        <position position="318"/>
    </location>
</feature>
<reference key="1">
    <citation type="journal article" date="2006" name="J. Biol. Chem.">
        <title>Plant phenylacetaldehyde synthase is a bifunctional homotetrameric enzyme that catalyzes phenylalanine decarboxylation and oxidation.</title>
        <authorList>
            <person name="Kaminaga Y."/>
            <person name="Schnepp J."/>
            <person name="Peel G."/>
            <person name="Kish C.M."/>
            <person name="Ben-Nissan G."/>
            <person name="Weiss D."/>
            <person name="Orlova I."/>
            <person name="Lavie O."/>
            <person name="Rhodes D."/>
            <person name="Wood K."/>
            <person name="Porterfield D.M."/>
            <person name="Cooper A.J."/>
            <person name="Schloss J.V."/>
            <person name="Pichersky E."/>
            <person name="Vainstein A."/>
            <person name="Dudareva N."/>
        </authorList>
    </citation>
    <scope>NUCLEOTIDE SEQUENCE [MRNA]</scope>
    <scope>FUNCTION</scope>
    <scope>CATALYTIC ACTIVITY</scope>
    <scope>COFACTOR</scope>
    <scope>BIOPHYSICOCHEMICAL PROPERTIES</scope>
    <scope>SUBUNIT</scope>
    <scope>TISSUE SPECIFICITY</scope>
    <scope>INDUCTION</scope>
    <source>
        <strain>cv. Mitchell</strain>
    </source>
</reference>
<comment type="function">
    <text evidence="2">Bifunctional enzyme that catalyzes the decarboxylation of L-phenylalanine to 2-phenylethylamine, which is then oxidized to form 2-phenylacetaldehyde, a constituent of floral scent (PubMed:16766535). 2-phenylacetaldehyde is a precursor of 2-phenylethanol, another constituent of floral scent (PubMed:16766535).</text>
</comment>
<comment type="catalytic activity">
    <reaction evidence="2">
        <text>L-phenylalanine + O2 + H2O + H(+) = 2-phenylacetaldehyde + H2O2 + NH4(+) + CO2</text>
        <dbReference type="Rhea" id="RHEA:55532"/>
        <dbReference type="ChEBI" id="CHEBI:15377"/>
        <dbReference type="ChEBI" id="CHEBI:15378"/>
        <dbReference type="ChEBI" id="CHEBI:15379"/>
        <dbReference type="ChEBI" id="CHEBI:16240"/>
        <dbReference type="ChEBI" id="CHEBI:16424"/>
        <dbReference type="ChEBI" id="CHEBI:16526"/>
        <dbReference type="ChEBI" id="CHEBI:28938"/>
        <dbReference type="ChEBI" id="CHEBI:58095"/>
        <dbReference type="EC" id="4.1.1.109"/>
    </reaction>
    <physiologicalReaction direction="left-to-right" evidence="2">
        <dbReference type="Rhea" id="RHEA:55533"/>
    </physiologicalReaction>
</comment>
<comment type="cofactor">
    <cofactor evidence="2">
        <name>pyridoxal 5'-phosphate</name>
        <dbReference type="ChEBI" id="CHEBI:597326"/>
    </cofactor>
</comment>
<comment type="biophysicochemical properties">
    <kinetics>
        <KM evidence="2">1.18 mM for L-phenylalanine</KM>
    </kinetics>
    <phDependence>
        <text evidence="2">Optimum pH is 8.5.</text>
    </phDependence>
</comment>
<comment type="subunit">
    <text evidence="2">Homotetramer.</text>
</comment>
<comment type="tissue specificity">
    <text evidence="2">Highly expressed in corolla limbs and at lower levels in corolla tubes and ovaries.</text>
</comment>
<comment type="induction">
    <text evidence="2">Follows a circadian-oscillation with the highest expression in the middle of the light phase and the lowest expression in the middle of the dark phase.</text>
</comment>
<comment type="miscellaneous">
    <text evidence="2">Flowers of plants silencing PAAS, neither produce 2-phenylacetaldehyde nor 2-phenylethanol.</text>
</comment>
<comment type="similarity">
    <text evidence="4">Belongs to the group II decarboxylase family.</text>
</comment>
<gene>
    <name evidence="3" type="primary">PAAS</name>
</gene>
<organism>
    <name type="scientific">Petunia hybrida</name>
    <name type="common">Petunia</name>
    <dbReference type="NCBI Taxonomy" id="4102"/>
    <lineage>
        <taxon>Eukaryota</taxon>
        <taxon>Viridiplantae</taxon>
        <taxon>Streptophyta</taxon>
        <taxon>Embryophyta</taxon>
        <taxon>Tracheophyta</taxon>
        <taxon>Spermatophyta</taxon>
        <taxon>Magnoliopsida</taxon>
        <taxon>eudicotyledons</taxon>
        <taxon>Gunneridae</taxon>
        <taxon>Pentapetalae</taxon>
        <taxon>asterids</taxon>
        <taxon>lamiids</taxon>
        <taxon>Solanales</taxon>
        <taxon>Solanaceae</taxon>
        <taxon>Petunioideae</taxon>
        <taxon>Petunia</taxon>
    </lineage>
</organism>
<accession>Q0ZQX0</accession>
<evidence type="ECO:0000250" key="1">
    <source>
        <dbReference type="UniProtKB" id="Q8RY79"/>
    </source>
</evidence>
<evidence type="ECO:0000269" key="2">
    <source>
    </source>
</evidence>
<evidence type="ECO:0000303" key="3">
    <source>
    </source>
</evidence>
<evidence type="ECO:0000305" key="4"/>
<evidence type="ECO:0000305" key="5">
    <source>
    </source>
</evidence>
<dbReference type="EC" id="4.1.1.109" evidence="2"/>
<dbReference type="EMBL" id="DQ243784">
    <property type="protein sequence ID" value="ABB72475.1"/>
    <property type="molecule type" value="mRNA"/>
</dbReference>
<dbReference type="SMR" id="Q0ZQX0"/>
<dbReference type="KEGG" id="ag:ABB72475"/>
<dbReference type="BioCyc" id="MetaCyc:MONOMER-13645"/>
<dbReference type="BRENDA" id="4.1.1.109">
    <property type="organism ID" value="4700"/>
</dbReference>
<dbReference type="GO" id="GO:0005737">
    <property type="term" value="C:cytoplasm"/>
    <property type="evidence" value="ECO:0007669"/>
    <property type="project" value="TreeGrafter"/>
</dbReference>
<dbReference type="GO" id="GO:1990055">
    <property type="term" value="F:phenylacetaldehyde synthase activity"/>
    <property type="evidence" value="ECO:0007669"/>
    <property type="project" value="UniProtKB-EC"/>
</dbReference>
<dbReference type="GO" id="GO:0030170">
    <property type="term" value="F:pyridoxal phosphate binding"/>
    <property type="evidence" value="ECO:0007669"/>
    <property type="project" value="InterPro"/>
</dbReference>
<dbReference type="GO" id="GO:0006520">
    <property type="term" value="P:amino acid metabolic process"/>
    <property type="evidence" value="ECO:0007669"/>
    <property type="project" value="InterPro"/>
</dbReference>
<dbReference type="GO" id="GO:0019752">
    <property type="term" value="P:carboxylic acid metabolic process"/>
    <property type="evidence" value="ECO:0007669"/>
    <property type="project" value="InterPro"/>
</dbReference>
<dbReference type="CDD" id="cd06450">
    <property type="entry name" value="DOPA_deC_like"/>
    <property type="match status" value="1"/>
</dbReference>
<dbReference type="FunFam" id="1.20.1340.10:FF:000001">
    <property type="entry name" value="Histidine decarboxylase"/>
    <property type="match status" value="1"/>
</dbReference>
<dbReference type="FunFam" id="3.40.640.10:FF:000025">
    <property type="entry name" value="Histidine decarboxylase"/>
    <property type="match status" value="1"/>
</dbReference>
<dbReference type="Gene3D" id="3.90.1150.10">
    <property type="entry name" value="Aspartate Aminotransferase, domain 1"/>
    <property type="match status" value="1"/>
</dbReference>
<dbReference type="Gene3D" id="1.20.1340.10">
    <property type="entry name" value="dopa decarboxylase, N-terminal domain"/>
    <property type="match status" value="1"/>
</dbReference>
<dbReference type="Gene3D" id="3.40.640.10">
    <property type="entry name" value="Type I PLP-dependent aspartate aminotransferase-like (Major domain)"/>
    <property type="match status" value="1"/>
</dbReference>
<dbReference type="InterPro" id="IPR010977">
    <property type="entry name" value="Aromatic_deC"/>
</dbReference>
<dbReference type="InterPro" id="IPR002129">
    <property type="entry name" value="PyrdxlP-dep_de-COase"/>
</dbReference>
<dbReference type="InterPro" id="IPR015424">
    <property type="entry name" value="PyrdxlP-dep_Trfase"/>
</dbReference>
<dbReference type="InterPro" id="IPR015421">
    <property type="entry name" value="PyrdxlP-dep_Trfase_major"/>
</dbReference>
<dbReference type="InterPro" id="IPR015422">
    <property type="entry name" value="PyrdxlP-dep_Trfase_small"/>
</dbReference>
<dbReference type="InterPro" id="IPR021115">
    <property type="entry name" value="Pyridoxal-P_BS"/>
</dbReference>
<dbReference type="PANTHER" id="PTHR11999">
    <property type="entry name" value="GROUP II PYRIDOXAL-5-PHOSPHATE DECARBOXYLASE"/>
    <property type="match status" value="1"/>
</dbReference>
<dbReference type="PANTHER" id="PTHR11999:SF156">
    <property type="entry name" value="TYROSINE DECARBOXYLASE"/>
    <property type="match status" value="1"/>
</dbReference>
<dbReference type="Pfam" id="PF00282">
    <property type="entry name" value="Pyridoxal_deC"/>
    <property type="match status" value="1"/>
</dbReference>
<dbReference type="PRINTS" id="PR00800">
    <property type="entry name" value="YHDCRBOXLASE"/>
</dbReference>
<dbReference type="SUPFAM" id="SSF53383">
    <property type="entry name" value="PLP-dependent transferases"/>
    <property type="match status" value="1"/>
</dbReference>
<dbReference type="PROSITE" id="PS00392">
    <property type="entry name" value="DDC_GAD_HDC_YDC"/>
    <property type="match status" value="1"/>
</dbReference>
<proteinExistence type="evidence at protein level"/>
<keyword id="KW-0210">Decarboxylase</keyword>
<keyword id="KW-0456">Lyase</keyword>
<keyword id="KW-0663">Pyridoxal phosphate</keyword>
<protein>
    <recommendedName>
        <fullName evidence="3">Phenylacetaldehyde synthase</fullName>
        <shortName evidence="3">PhPAAS</shortName>
        <ecNumber evidence="2">4.1.1.109</ecNumber>
    </recommendedName>
</protein>
<sequence>MDTIKINPEFDGQFCKTTSLLDPEEFRRNGHMMVDFLADYFHNIEKYPVRSQVEPGYLERLLPDSAPIQPEPIEKILKDVRSDIFPGLTHWQSPNFFAYFPCSSSTAGILGEMLSAGLNVVGFSWIASPAATELESIVMDWLGKLINLPKTYLFSGGGGGVMQGTTCEVMLCTIVAARDKMLEKFGRENIDKLVVYASDQTHFSFQKAVKISGIKPENFRAIPTTKATEFSLNPESLRRAIQEDKKAGLIPLFLCTSIGTTSTTAVDPLKPLCEIAEEYGIWVHVDAAYAGSACICPEFQHFLDGVEHANSFSFNAHKWLFTTLDCCCLWLKDPSSLTKALSTNPEVLRNDATDSEQVVDYKDWQITLSRRFRSLKLWLVLKSYGVANLRNFIRSHIEMAKHFEELVAMDERFEIMAPRNFSLVCFRVSLLALEKKFNFVDETQVNEFNAKLLESIISSGNVYMTHTVVEGVYMIRFAVGAPLTDYPHIDMAWNVVRNHATMMLNA</sequence>
<name>PAAS_PETHY</name>